<protein>
    <recommendedName>
        <fullName>Growth arrest-specific protein 2</fullName>
        <shortName>GAS-2</shortName>
    </recommendedName>
</protein>
<gene>
    <name type="primary">Gas2</name>
    <name type="synonym">Gas-2</name>
</gene>
<reference key="1">
    <citation type="journal article" date="1988" name="Cell">
        <title>Genes specifically expressed at growth arrest of mammalian cells.</title>
        <authorList>
            <person name="Schneider C."/>
            <person name="King R.M."/>
            <person name="Philipson L."/>
        </authorList>
    </citation>
    <scope>NUCLEOTIDE SEQUENCE [MRNA]</scope>
</reference>
<reference key="2">
    <citation type="journal article" date="2004" name="Genome Res.">
        <title>The status, quality, and expansion of the NIH full-length cDNA project: the Mammalian Gene Collection (MGC).</title>
        <authorList>
            <consortium name="The MGC Project Team"/>
        </authorList>
    </citation>
    <scope>NUCLEOTIDE SEQUENCE [LARGE SCALE MRNA]</scope>
    <source>
        <strain>FVB/N</strain>
        <tissue>Embryo</tissue>
        <tissue>Kidney</tissue>
    </source>
</reference>
<reference key="3">
    <citation type="journal article" date="1992" name="J. Cell Biol.">
        <title>Gas2, a growth arrest-specific protein, is a component of the microfilament network system.</title>
        <authorList>
            <person name="Brancolini C."/>
            <person name="Bottega S."/>
            <person name="Schneider C."/>
        </authorList>
    </citation>
    <scope>SUBCELLULAR LOCATION</scope>
</reference>
<reference key="4">
    <citation type="journal article" date="1994" name="J. Cell Biol.">
        <title>Phosphorylation of the growth arrest-specific protein Gas2 is coupled to actin rearrangements during Go--&gt;G1 transition in NIH 3T3 cells.</title>
        <authorList>
            <person name="Brancolini C."/>
            <person name="Schneider C."/>
        </authorList>
    </citation>
    <scope>PHOSPHORYLATION</scope>
    <scope>SUBCELLULAR LOCATION</scope>
</reference>
<reference key="5">
    <citation type="journal article" date="1995" name="EMBO J.">
        <title>Microfilament reorganization during apoptosis: the role of Gas2, a possible substrate for ICE-like proteases.</title>
        <authorList>
            <person name="Brancolini C."/>
            <person name="Benedetti M."/>
            <person name="Schneider C."/>
        </authorList>
    </citation>
    <scope>PROTEOLYTIC PROCESSING</scope>
    <scope>MUTAGENESIS OF ASP-279</scope>
</reference>
<reference key="6">
    <citation type="journal article" date="1999" name="Dev. Biol.">
        <title>gas2 is a multifunctional gene involved in the regulation of apoptosis and chondrogenesis in the developing mouse limb.</title>
        <authorList>
            <person name="Lee K.K."/>
            <person name="Tang M.K."/>
            <person name="Yew D.T."/>
            <person name="Chow P.H."/>
            <person name="Yee S.P."/>
            <person name="Schneider C."/>
            <person name="Brancolini C."/>
        </authorList>
    </citation>
    <scope>DEVELOPMENTAL STAGE</scope>
</reference>
<reference key="7">
    <citation type="journal article" date="2008" name="J. Proteome Res.">
        <title>Specific phosphopeptide enrichment with immobilized titanium ion affinity chromatography adsorbent for phosphoproteome analysis.</title>
        <authorList>
            <person name="Zhou H."/>
            <person name="Ye M."/>
            <person name="Dong J."/>
            <person name="Han G."/>
            <person name="Jiang X."/>
            <person name="Wu R."/>
            <person name="Zou H."/>
        </authorList>
    </citation>
    <scope>IDENTIFICATION BY MASS SPECTROMETRY [LARGE SCALE ANALYSIS]</scope>
    <source>
        <tissue>Liver</tissue>
    </source>
</reference>
<reference key="8">
    <citation type="journal article" date="2010" name="Cell">
        <title>A tissue-specific atlas of mouse protein phosphorylation and expression.</title>
        <authorList>
            <person name="Huttlin E.L."/>
            <person name="Jedrychowski M.P."/>
            <person name="Elias J.E."/>
            <person name="Goswami T."/>
            <person name="Rad R."/>
            <person name="Beausoleil S.A."/>
            <person name="Villen J."/>
            <person name="Haas W."/>
            <person name="Sowa M.E."/>
            <person name="Gygi S.P."/>
        </authorList>
    </citation>
    <scope>PHOSPHORYLATION [LARGE SCALE ANALYSIS] AT SER-184 AND SER-188</scope>
    <scope>IDENTIFICATION BY MASS SPECTROMETRY [LARGE SCALE ANALYSIS]</scope>
    <source>
        <tissue>Kidney</tissue>
        <tissue>Liver</tissue>
    </source>
</reference>
<reference key="9">
    <citation type="submission" date="2005-01" db="PDB data bank">
        <title>Solution structure of the GAS2 domain of the growth arrest specific 2 protein.</title>
        <authorList>
            <consortium name="RIKEN structural genomics initiative (RSGI)"/>
        </authorList>
    </citation>
    <scope>STRUCTURE BY NMR OF 198-284</scope>
</reference>
<reference key="10">
    <citation type="journal article" date="2021" name="Dev. Cell">
        <title>Cochlear supporting cells require GAS2 for cytoskeletal architecture and hearing.</title>
        <authorList>
            <person name="Chen T."/>
            <person name="Rohacek A.M."/>
            <person name="Caporizzo M."/>
            <person name="Nankali A."/>
            <person name="Smits J.J."/>
            <person name="Oostrik J."/>
            <person name="Lanting C.P."/>
            <person name="Kuecuek E."/>
            <person name="Gilissen C."/>
            <person name="van de Kamp J.M."/>
            <person name="Pennings R.J.E."/>
            <person name="Rakowiecki S.M."/>
            <person name="Kaestner K.H."/>
            <person name="Ohlemiller K.K."/>
            <person name="Oghalai J.S."/>
            <person name="Kremer H."/>
            <person name="Prosser B.L."/>
            <person name="Epstein D.J."/>
        </authorList>
    </citation>
    <scope>FUNCTION</scope>
    <scope>SUBCELLULAR LOCATION</scope>
    <scope>TISSUE SPECIFICITY</scope>
    <scope>DEVELOPMENTAL STAGE</scope>
</reference>
<sequence>MMCTALSPKVRSGPGLSDMHQYSQWLASRHEANLLPMKEDLALWLTNLLGKEITAETFMEKLDNGALLCQLAATVQEKFKESMDANKPAKTLPLKKIPCKASAPSGSFFARDNTANFLSWCRDLGVDETCLFESEGLVLHKQPREVCLCLLELGRIAARYGVEPPGLIKLEKEIEQEETLSAPSPSPSPSSKSSGKKSTGNLLDDAVKRISEDPPCKCPTKFCVERLSQGRYRVGEKILFIRMLHNKHVMVRVGGGWETFAGYLLKHDPCRMLQISRVDGKTSPVQSKSPTLKDMNPDNYLVVSATYKAKKEIK</sequence>
<feature type="chain" id="PRO_0000190441" description="Growth arrest-specific protein 2">
    <location>
        <begin position="1"/>
        <end position="314"/>
    </location>
</feature>
<feature type="domain" description="Calponin-homology (CH)" evidence="2">
    <location>
        <begin position="35"/>
        <end position="157"/>
    </location>
</feature>
<feature type="domain" description="GAR" evidence="3">
    <location>
        <begin position="198"/>
        <end position="271"/>
    </location>
</feature>
<feature type="region of interest" description="Disordered" evidence="4">
    <location>
        <begin position="176"/>
        <end position="200"/>
    </location>
</feature>
<feature type="compositionally biased region" description="Low complexity" evidence="4">
    <location>
        <begin position="189"/>
        <end position="198"/>
    </location>
</feature>
<feature type="site" description="Cleavage; by a caspase during apoptosis" evidence="8">
    <location>
        <begin position="279"/>
        <end position="280"/>
    </location>
</feature>
<feature type="modified residue" description="Phosphoserine" evidence="11">
    <location>
        <position position="184"/>
    </location>
</feature>
<feature type="modified residue" description="Phosphoserine" evidence="11">
    <location>
        <position position="188"/>
    </location>
</feature>
<feature type="mutagenesis site" description="Abolishes proteolytic processing." evidence="8">
    <original>D</original>
    <variation>A</variation>
    <location>
        <position position="279"/>
    </location>
</feature>
<feature type="helix" evidence="12">
    <location>
        <begin position="202"/>
        <end position="211"/>
    </location>
</feature>
<feature type="strand" evidence="12">
    <location>
        <begin position="218"/>
        <end position="220"/>
    </location>
</feature>
<feature type="strand" evidence="12">
    <location>
        <begin position="224"/>
        <end position="228"/>
    </location>
</feature>
<feature type="strand" evidence="12">
    <location>
        <begin position="231"/>
        <end position="234"/>
    </location>
</feature>
<feature type="strand" evidence="12">
    <location>
        <begin position="237"/>
        <end position="244"/>
    </location>
</feature>
<feature type="turn" evidence="12">
    <location>
        <begin position="245"/>
        <end position="247"/>
    </location>
</feature>
<feature type="strand" evidence="12">
    <location>
        <begin position="248"/>
        <end position="253"/>
    </location>
</feature>
<feature type="strand" evidence="12">
    <location>
        <begin position="256"/>
        <end position="259"/>
    </location>
</feature>
<feature type="helix" evidence="12">
    <location>
        <begin position="260"/>
        <end position="267"/>
    </location>
</feature>
<feature type="helix" evidence="12">
    <location>
        <begin position="269"/>
        <end position="272"/>
    </location>
</feature>
<organism>
    <name type="scientific">Mus musculus</name>
    <name type="common">Mouse</name>
    <dbReference type="NCBI Taxonomy" id="10090"/>
    <lineage>
        <taxon>Eukaryota</taxon>
        <taxon>Metazoa</taxon>
        <taxon>Chordata</taxon>
        <taxon>Craniata</taxon>
        <taxon>Vertebrata</taxon>
        <taxon>Euteleostomi</taxon>
        <taxon>Mammalia</taxon>
        <taxon>Eutheria</taxon>
        <taxon>Euarchontoglires</taxon>
        <taxon>Glires</taxon>
        <taxon>Rodentia</taxon>
        <taxon>Myomorpha</taxon>
        <taxon>Muroidea</taxon>
        <taxon>Muridae</taxon>
        <taxon>Murinae</taxon>
        <taxon>Mus</taxon>
        <taxon>Mus</taxon>
    </lineage>
</organism>
<name>GAS2_MOUSE</name>
<accession>P11862</accession>
<comment type="function">
    <text evidence="7">Required to maintain microtubule bundles in inner ear supporting cells, affording them with mechanical stiffness to transmit sound energy through the cochlea.</text>
</comment>
<comment type="subcellular location">
    <subcellularLocation>
        <location evidence="9">Cytoplasm</location>
        <location evidence="9">Cytoskeleton</location>
        <location evidence="9">Stress fiber</location>
    </subcellularLocation>
    <subcellularLocation>
        <location evidence="9">Membrane</location>
        <topology evidence="9">Peripheral membrane protein</topology>
    </subcellularLocation>
    <text evidence="6 7 9">Component of the microfilament system (PubMed:1607387). Colocalizes with actin fibers at the cell border and along the stress fibers in growth-arrested fibroblasts (PubMed:8120096). Mainly membrane-associated (PubMed:8120096). When hyperphosphorylated, accumulates at membrane ruffles (PubMed:8120096). Colocalizes with detyrosinated alpha-tubulin along the length of microtubule bundles in inner and outer pillar cells (PubMed:33964205).</text>
</comment>
<comment type="tissue specificity">
    <text evidence="7">Expressed in most tissues. Highest levels in liver, lung and kidney. In the embryo strongly expressed in regions that undergo extensive apoptosis, such as the intervertebral tissues, the cranofacial mesenchyme and the cartilage of the limbs. Expressed in the inner ear, in inner and outer pillar cells (at protein level) (PubMed:33964205).</text>
</comment>
<comment type="developmental stage">
    <text evidence="5 7">At 11.5 dpc and 13.5 dpc, strongly expressed in the soft connective tissue of the face and trunk, and in invertebral tissues (at protein level). Low levels are also found in brain and neural tube (at protein level). At 13.5 dpc, low levels are found in lung, kidney, eye lens and in vertebral cartilage located cranially (at protein level). In 11.5 dpc hindlimbs, weakly expressed by the mesenchymal cells surrounding the perspective cartilage-forming regions. In 12.5 dpc hindlimbs strongly expressed by cells enveloping the chondrogenic primordia of the digits, metatarsals, tibia, and femur, and the soft connective tissue in the interdigital tissues. In 13.5 dpc hindlimbs, expression is maintained in the intergigital tissues located proximally and is found in some chondrocytes in the stylopod and in mesenchymal cells surrounding the cartilage in the autopod and zygopod (at protein level). In 13.5 dpc forelimbs, strongly expressed in the pre-hypertrophic and hypertrophic regions of the humerus, radius, and ulna. Expression in hypertrophic chondrocytes is maintained at 14.5 dpc and is not detectable at 15.5 dpc (at protein level). At day 14.5 dpc also expressed by chondrocytes in the cartilage forming the carpals and tarsals and by mesenchymal cells in the process of condensing to form tendons (at protein level). In 13.5 dpc hindlimbs expressed in some myoblasts in the proximal myogenic region. In older limbs expression is maintained in the myotubules (at protein level) (PubMed:10049561). In developing inner ear, from 10.5 to 18.5 dpc, expressed along the medial and lateral walls of the otic vesicle and cochlear duct. Also detected in the organ of Corti at postnatal stages, including pillar cells at postnatal day 3 (P3), and Deiters' cells at P5. Expression persists in inner and outer pillar cells as they separated from each other to form the tunnel of Corti at P7 and as they matured into adulthood. At P14, also detected in the stria vascularis, spiral prominence and greater epithelial ridge. Absent from hair cells and spiral ganglion neurons (at protein level) (PubMed:33964205).</text>
</comment>
<comment type="induction">
    <text>Down-regulated by mitogens.</text>
</comment>
<comment type="PTM">
    <text evidence="1">Cleaved, during apoptosis, on a specific aspartic residue by caspases.</text>
</comment>
<comment type="PTM">
    <text evidence="9">Phosphorylated on serine residues during the G0-G1 transition phase.</text>
</comment>
<comment type="similarity">
    <text evidence="10">Belongs to the GAS2 family.</text>
</comment>
<comment type="caution">
    <text evidence="10">It is uncertain whether Met-1 or Met-2 is the initiator.</text>
</comment>
<evidence type="ECO:0000250" key="1"/>
<evidence type="ECO:0000255" key="2">
    <source>
        <dbReference type="PROSITE-ProRule" id="PRU00044"/>
    </source>
</evidence>
<evidence type="ECO:0000255" key="3">
    <source>
        <dbReference type="PROSITE-ProRule" id="PRU00792"/>
    </source>
</evidence>
<evidence type="ECO:0000256" key="4">
    <source>
        <dbReference type="SAM" id="MobiDB-lite"/>
    </source>
</evidence>
<evidence type="ECO:0000269" key="5">
    <source>
    </source>
</evidence>
<evidence type="ECO:0000269" key="6">
    <source>
    </source>
</evidence>
<evidence type="ECO:0000269" key="7">
    <source>
    </source>
</evidence>
<evidence type="ECO:0000269" key="8">
    <source>
    </source>
</evidence>
<evidence type="ECO:0000269" key="9">
    <source>
    </source>
</evidence>
<evidence type="ECO:0000305" key="10"/>
<evidence type="ECO:0007744" key="11">
    <source>
    </source>
</evidence>
<evidence type="ECO:0007829" key="12">
    <source>
        <dbReference type="PDB" id="1V5R"/>
    </source>
</evidence>
<dbReference type="EMBL" id="M21828">
    <property type="protein sequence ID" value="AAA37660.1"/>
    <property type="molecule type" value="mRNA"/>
</dbReference>
<dbReference type="EMBL" id="BC013456">
    <property type="protein sequence ID" value="AAH13456.1"/>
    <property type="molecule type" value="mRNA"/>
</dbReference>
<dbReference type="EMBL" id="BC053446">
    <property type="protein sequence ID" value="AAH53446.1"/>
    <property type="molecule type" value="mRNA"/>
</dbReference>
<dbReference type="CCDS" id="CCDS21310.1"/>
<dbReference type="PIR" id="A31590">
    <property type="entry name" value="A31590"/>
</dbReference>
<dbReference type="RefSeq" id="NP_001317536.1">
    <property type="nucleotide sequence ID" value="NM_001330607.2"/>
</dbReference>
<dbReference type="RefSeq" id="NP_001399387.1">
    <property type="nucleotide sequence ID" value="NM_001412458.1"/>
</dbReference>
<dbReference type="RefSeq" id="NP_001399388.1">
    <property type="nucleotide sequence ID" value="NM_001412459.1"/>
</dbReference>
<dbReference type="RefSeq" id="NP_001399389.1">
    <property type="nucleotide sequence ID" value="NM_001412460.1"/>
</dbReference>
<dbReference type="RefSeq" id="NP_001399390.1">
    <property type="nucleotide sequence ID" value="NM_001412461.1"/>
</dbReference>
<dbReference type="RefSeq" id="NP_001399391.1">
    <property type="nucleotide sequence ID" value="NM_001412462.1"/>
</dbReference>
<dbReference type="RefSeq" id="NP_001399392.1">
    <property type="nucleotide sequence ID" value="NM_001412463.1"/>
</dbReference>
<dbReference type="RefSeq" id="NP_001399393.1">
    <property type="nucleotide sequence ID" value="NM_001412464.1"/>
</dbReference>
<dbReference type="RefSeq" id="NP_001399394.1">
    <property type="nucleotide sequence ID" value="NM_001412465.1"/>
</dbReference>
<dbReference type="RefSeq" id="NP_032113.1">
    <property type="nucleotide sequence ID" value="NM_008087.4"/>
</dbReference>
<dbReference type="RefSeq" id="XP_006540687.1">
    <property type="nucleotide sequence ID" value="XM_006540624.3"/>
</dbReference>
<dbReference type="RefSeq" id="XP_006540688.1">
    <property type="nucleotide sequence ID" value="XM_006540625.3"/>
</dbReference>
<dbReference type="RefSeq" id="XP_006540689.1">
    <property type="nucleotide sequence ID" value="XM_006540626.3"/>
</dbReference>
<dbReference type="RefSeq" id="XP_030097997.1">
    <property type="nucleotide sequence ID" value="XM_030242137.2"/>
</dbReference>
<dbReference type="RefSeq" id="XP_030098000.1">
    <property type="nucleotide sequence ID" value="XM_030242140.2"/>
</dbReference>
<dbReference type="PDB" id="1V5R">
    <property type="method" value="NMR"/>
    <property type="chains" value="A=201-284"/>
</dbReference>
<dbReference type="PDBsum" id="1V5R"/>
<dbReference type="BMRB" id="P11862"/>
<dbReference type="SMR" id="P11862"/>
<dbReference type="BioGRID" id="199833">
    <property type="interactions" value="2"/>
</dbReference>
<dbReference type="FunCoup" id="P11862">
    <property type="interactions" value="67"/>
</dbReference>
<dbReference type="STRING" id="10090.ENSMUSP00000103217"/>
<dbReference type="iPTMnet" id="P11862"/>
<dbReference type="PhosphoSitePlus" id="P11862"/>
<dbReference type="SwissPalm" id="P11862"/>
<dbReference type="jPOST" id="P11862"/>
<dbReference type="PaxDb" id="10090-ENSMUSP00000103217"/>
<dbReference type="PeptideAtlas" id="P11862"/>
<dbReference type="ProteomicsDB" id="271632"/>
<dbReference type="Pumba" id="P11862"/>
<dbReference type="Antibodypedia" id="12653">
    <property type="antibodies" value="322 antibodies from 33 providers"/>
</dbReference>
<dbReference type="DNASU" id="14453"/>
<dbReference type="Ensembl" id="ENSMUST00000051912.13">
    <property type="protein sequence ID" value="ENSMUSP00000053514.7"/>
    <property type="gene ID" value="ENSMUSG00000030498.16"/>
</dbReference>
<dbReference type="Ensembl" id="ENSMUST00000107591.9">
    <property type="protein sequence ID" value="ENSMUSP00000103217.3"/>
    <property type="gene ID" value="ENSMUSG00000030498.16"/>
</dbReference>
<dbReference type="Ensembl" id="ENSMUST00000208711.2">
    <property type="protein sequence ID" value="ENSMUSP00000146537.2"/>
    <property type="gene ID" value="ENSMUSG00000030498.16"/>
</dbReference>
<dbReference type="GeneID" id="14453"/>
<dbReference type="KEGG" id="mmu:14453"/>
<dbReference type="UCSC" id="uc009hch.1">
    <property type="organism name" value="mouse"/>
</dbReference>
<dbReference type="AGR" id="MGI:95657"/>
<dbReference type="CTD" id="2620"/>
<dbReference type="MGI" id="MGI:95657">
    <property type="gene designation" value="Gas2"/>
</dbReference>
<dbReference type="VEuPathDB" id="HostDB:ENSMUSG00000030498"/>
<dbReference type="eggNOG" id="KOG0516">
    <property type="taxonomic scope" value="Eukaryota"/>
</dbReference>
<dbReference type="GeneTree" id="ENSGT00940000155755"/>
<dbReference type="HOGENOM" id="CLU_025484_1_0_1"/>
<dbReference type="InParanoid" id="P11862"/>
<dbReference type="OMA" id="GLHGCDY"/>
<dbReference type="OrthoDB" id="2250192at2759"/>
<dbReference type="PhylomeDB" id="P11862"/>
<dbReference type="TreeFam" id="TF323754"/>
<dbReference type="Reactome" id="R-MMU-264870">
    <property type="pathway name" value="Caspase-mediated cleavage of cytoskeletal proteins"/>
</dbReference>
<dbReference type="BioGRID-ORCS" id="14453">
    <property type="hits" value="1 hit in 77 CRISPR screens"/>
</dbReference>
<dbReference type="ChiTaRS" id="Gas2">
    <property type="organism name" value="mouse"/>
</dbReference>
<dbReference type="EvolutionaryTrace" id="P11862"/>
<dbReference type="PRO" id="PR:P11862"/>
<dbReference type="Proteomes" id="UP000000589">
    <property type="component" value="Chromosome 7"/>
</dbReference>
<dbReference type="RNAct" id="P11862">
    <property type="molecule type" value="protein"/>
</dbReference>
<dbReference type="Bgee" id="ENSMUSG00000030498">
    <property type="expression patterns" value="Expressed in vestibular epithelium and 262 other cell types or tissues"/>
</dbReference>
<dbReference type="ExpressionAtlas" id="P11862">
    <property type="expression patterns" value="baseline and differential"/>
</dbReference>
<dbReference type="GO" id="GO:0005737">
    <property type="term" value="C:cytoplasm"/>
    <property type="evidence" value="ECO:0007669"/>
    <property type="project" value="UniProtKB-KW"/>
</dbReference>
<dbReference type="GO" id="GO:0016020">
    <property type="term" value="C:membrane"/>
    <property type="evidence" value="ECO:0007669"/>
    <property type="project" value="UniProtKB-SubCell"/>
</dbReference>
<dbReference type="GO" id="GO:0001725">
    <property type="term" value="C:stress fiber"/>
    <property type="evidence" value="ECO:0007669"/>
    <property type="project" value="UniProtKB-SubCell"/>
</dbReference>
<dbReference type="GO" id="GO:0008017">
    <property type="term" value="F:microtubule binding"/>
    <property type="evidence" value="ECO:0007669"/>
    <property type="project" value="InterPro"/>
</dbReference>
<dbReference type="GO" id="GO:0001547">
    <property type="term" value="P:antral ovarian follicle growth"/>
    <property type="evidence" value="ECO:0000315"/>
    <property type="project" value="MGI"/>
</dbReference>
<dbReference type="GO" id="GO:0006915">
    <property type="term" value="P:apoptotic process"/>
    <property type="evidence" value="ECO:0007669"/>
    <property type="project" value="UniProtKB-KW"/>
</dbReference>
<dbReference type="GO" id="GO:0071711">
    <property type="term" value="P:basement membrane organization"/>
    <property type="evidence" value="ECO:0000315"/>
    <property type="project" value="MGI"/>
</dbReference>
<dbReference type="GO" id="GO:0001544">
    <property type="term" value="P:initiation of primordial ovarian follicle growth"/>
    <property type="evidence" value="ECO:0000315"/>
    <property type="project" value="MGI"/>
</dbReference>
<dbReference type="GO" id="GO:0030728">
    <property type="term" value="P:ovulation"/>
    <property type="evidence" value="ECO:0000315"/>
    <property type="project" value="MGI"/>
</dbReference>
<dbReference type="GO" id="GO:0051726">
    <property type="term" value="P:regulation of cell cycle"/>
    <property type="evidence" value="ECO:0007669"/>
    <property type="project" value="UniProtKB-KW"/>
</dbReference>
<dbReference type="GO" id="GO:0008360">
    <property type="term" value="P:regulation of cell shape"/>
    <property type="evidence" value="ECO:0007669"/>
    <property type="project" value="UniProtKB-KW"/>
</dbReference>
<dbReference type="GO" id="GO:0008593">
    <property type="term" value="P:regulation of Notch signaling pathway"/>
    <property type="evidence" value="ECO:0000315"/>
    <property type="project" value="MGI"/>
</dbReference>
<dbReference type="CDD" id="cd21267">
    <property type="entry name" value="CH_GAS2"/>
    <property type="match status" value="1"/>
</dbReference>
<dbReference type="FunFam" id="1.10.418.10:FF:000052">
    <property type="entry name" value="Growth arrest specific 2"/>
    <property type="match status" value="1"/>
</dbReference>
<dbReference type="FunFam" id="3.30.920.20:FF:000003">
    <property type="entry name" value="Growth arrest-specific 2 like 3"/>
    <property type="match status" value="1"/>
</dbReference>
<dbReference type="Gene3D" id="1.10.418.10">
    <property type="entry name" value="Calponin-like domain"/>
    <property type="match status" value="1"/>
</dbReference>
<dbReference type="Gene3D" id="3.30.920.20">
    <property type="entry name" value="Gas2-like domain"/>
    <property type="match status" value="1"/>
</dbReference>
<dbReference type="InterPro" id="IPR001715">
    <property type="entry name" value="CH_dom"/>
</dbReference>
<dbReference type="InterPro" id="IPR036872">
    <property type="entry name" value="CH_dom_sf"/>
</dbReference>
<dbReference type="InterPro" id="IPR003108">
    <property type="entry name" value="GAR_dom"/>
</dbReference>
<dbReference type="InterPro" id="IPR036534">
    <property type="entry name" value="GAR_dom_sf"/>
</dbReference>
<dbReference type="PANTHER" id="PTHR46756:SF9">
    <property type="entry name" value="GROWTH ARREST-SPECIFIC PROTEIN 2"/>
    <property type="match status" value="1"/>
</dbReference>
<dbReference type="PANTHER" id="PTHR46756">
    <property type="entry name" value="TRANSGELIN"/>
    <property type="match status" value="1"/>
</dbReference>
<dbReference type="Pfam" id="PF00307">
    <property type="entry name" value="CH"/>
    <property type="match status" value="1"/>
</dbReference>
<dbReference type="Pfam" id="PF02187">
    <property type="entry name" value="GAS2"/>
    <property type="match status" value="1"/>
</dbReference>
<dbReference type="SMART" id="SM00033">
    <property type="entry name" value="CH"/>
    <property type="match status" value="1"/>
</dbReference>
<dbReference type="SMART" id="SM00243">
    <property type="entry name" value="GAS2"/>
    <property type="match status" value="1"/>
</dbReference>
<dbReference type="SUPFAM" id="SSF47576">
    <property type="entry name" value="Calponin-homology domain, CH-domain"/>
    <property type="match status" value="1"/>
</dbReference>
<dbReference type="SUPFAM" id="SSF143575">
    <property type="entry name" value="GAS2 domain-like"/>
    <property type="match status" value="1"/>
</dbReference>
<dbReference type="PROSITE" id="PS50021">
    <property type="entry name" value="CH"/>
    <property type="match status" value="1"/>
</dbReference>
<dbReference type="PROSITE" id="PS51460">
    <property type="entry name" value="GAR"/>
    <property type="match status" value="1"/>
</dbReference>
<proteinExistence type="evidence at protein level"/>
<keyword id="KW-0002">3D-structure</keyword>
<keyword id="KW-0053">Apoptosis</keyword>
<keyword id="KW-0131">Cell cycle</keyword>
<keyword id="KW-0133">Cell shape</keyword>
<keyword id="KW-0963">Cytoplasm</keyword>
<keyword id="KW-0206">Cytoskeleton</keyword>
<keyword id="KW-0338">Growth arrest</keyword>
<keyword id="KW-0472">Membrane</keyword>
<keyword id="KW-0597">Phosphoprotein</keyword>
<keyword id="KW-1185">Reference proteome</keyword>